<feature type="chain" id="PRO_1000056124" description="Large ribosomal subunit protein uL30">
    <location>
        <begin position="1"/>
        <end position="60"/>
    </location>
</feature>
<proteinExistence type="inferred from homology"/>
<accession>Q0AUJ8</accession>
<reference key="1">
    <citation type="journal article" date="2010" name="Environ. Microbiol.">
        <title>The genome of Syntrophomonas wolfei: new insights into syntrophic metabolism and biohydrogen production.</title>
        <authorList>
            <person name="Sieber J.R."/>
            <person name="Sims D.R."/>
            <person name="Han C."/>
            <person name="Kim E."/>
            <person name="Lykidis A."/>
            <person name="Lapidus A.L."/>
            <person name="McDonnald E."/>
            <person name="Rohlin L."/>
            <person name="Culley D.E."/>
            <person name="Gunsalus R."/>
            <person name="McInerney M.J."/>
        </authorList>
    </citation>
    <scope>NUCLEOTIDE SEQUENCE [LARGE SCALE GENOMIC DNA]</scope>
    <source>
        <strain>DSM 2245B / Goettingen</strain>
    </source>
</reference>
<protein>
    <recommendedName>
        <fullName evidence="1">Large ribosomal subunit protein uL30</fullName>
    </recommendedName>
    <alternativeName>
        <fullName evidence="2">50S ribosomal protein L30</fullName>
    </alternativeName>
</protein>
<comment type="subunit">
    <text evidence="1">Part of the 50S ribosomal subunit.</text>
</comment>
<comment type="similarity">
    <text evidence="1">Belongs to the universal ribosomal protein uL30 family.</text>
</comment>
<evidence type="ECO:0000255" key="1">
    <source>
        <dbReference type="HAMAP-Rule" id="MF_01371"/>
    </source>
</evidence>
<evidence type="ECO:0000305" key="2"/>
<dbReference type="EMBL" id="CP000448">
    <property type="protein sequence ID" value="ABI69606.1"/>
    <property type="molecule type" value="Genomic_DNA"/>
</dbReference>
<dbReference type="RefSeq" id="WP_011641690.1">
    <property type="nucleotide sequence ID" value="NC_008346.1"/>
</dbReference>
<dbReference type="SMR" id="Q0AUJ8"/>
<dbReference type="STRING" id="335541.Swol_2315"/>
<dbReference type="KEGG" id="swo:Swol_2315"/>
<dbReference type="eggNOG" id="COG1841">
    <property type="taxonomic scope" value="Bacteria"/>
</dbReference>
<dbReference type="HOGENOM" id="CLU_131047_1_1_9"/>
<dbReference type="OrthoDB" id="9812790at2"/>
<dbReference type="Proteomes" id="UP000001968">
    <property type="component" value="Chromosome"/>
</dbReference>
<dbReference type="GO" id="GO:0022625">
    <property type="term" value="C:cytosolic large ribosomal subunit"/>
    <property type="evidence" value="ECO:0007669"/>
    <property type="project" value="TreeGrafter"/>
</dbReference>
<dbReference type="GO" id="GO:0003735">
    <property type="term" value="F:structural constituent of ribosome"/>
    <property type="evidence" value="ECO:0007669"/>
    <property type="project" value="InterPro"/>
</dbReference>
<dbReference type="GO" id="GO:0006412">
    <property type="term" value="P:translation"/>
    <property type="evidence" value="ECO:0007669"/>
    <property type="project" value="UniProtKB-UniRule"/>
</dbReference>
<dbReference type="CDD" id="cd01658">
    <property type="entry name" value="Ribosomal_L30"/>
    <property type="match status" value="1"/>
</dbReference>
<dbReference type="Gene3D" id="3.30.1390.20">
    <property type="entry name" value="Ribosomal protein L30, ferredoxin-like fold domain"/>
    <property type="match status" value="1"/>
</dbReference>
<dbReference type="HAMAP" id="MF_01371_B">
    <property type="entry name" value="Ribosomal_uL30_B"/>
    <property type="match status" value="1"/>
</dbReference>
<dbReference type="InterPro" id="IPR036919">
    <property type="entry name" value="Ribo_uL30_ferredoxin-like_sf"/>
</dbReference>
<dbReference type="InterPro" id="IPR005996">
    <property type="entry name" value="Ribosomal_uL30_bac-type"/>
</dbReference>
<dbReference type="InterPro" id="IPR016082">
    <property type="entry name" value="Ribosomal_uL30_ferredoxin-like"/>
</dbReference>
<dbReference type="NCBIfam" id="TIGR01308">
    <property type="entry name" value="rpmD_bact"/>
    <property type="match status" value="1"/>
</dbReference>
<dbReference type="PANTHER" id="PTHR15892:SF2">
    <property type="entry name" value="LARGE RIBOSOMAL SUBUNIT PROTEIN UL30M"/>
    <property type="match status" value="1"/>
</dbReference>
<dbReference type="PANTHER" id="PTHR15892">
    <property type="entry name" value="MITOCHONDRIAL RIBOSOMAL PROTEIN L30"/>
    <property type="match status" value="1"/>
</dbReference>
<dbReference type="Pfam" id="PF00327">
    <property type="entry name" value="Ribosomal_L30"/>
    <property type="match status" value="1"/>
</dbReference>
<dbReference type="PIRSF" id="PIRSF002211">
    <property type="entry name" value="Ribosomal_L30_bac-type"/>
    <property type="match status" value="1"/>
</dbReference>
<dbReference type="SUPFAM" id="SSF55129">
    <property type="entry name" value="Ribosomal protein L30p/L7e"/>
    <property type="match status" value="1"/>
</dbReference>
<organism>
    <name type="scientific">Syntrophomonas wolfei subsp. wolfei (strain DSM 2245B / Goettingen)</name>
    <dbReference type="NCBI Taxonomy" id="335541"/>
    <lineage>
        <taxon>Bacteria</taxon>
        <taxon>Bacillati</taxon>
        <taxon>Bacillota</taxon>
        <taxon>Clostridia</taxon>
        <taxon>Eubacteriales</taxon>
        <taxon>Syntrophomonadaceae</taxon>
        <taxon>Syntrophomonas</taxon>
    </lineage>
</organism>
<name>RL30_SYNWW</name>
<sequence length="60" mass="6900">MAKQLKLTWTKSFIGCPETQRATIKSLGFKKLQQSLIKEDCPQIRGQISKVQHLLMVEEL</sequence>
<keyword id="KW-1185">Reference proteome</keyword>
<keyword id="KW-0687">Ribonucleoprotein</keyword>
<keyword id="KW-0689">Ribosomal protein</keyword>
<gene>
    <name evidence="1" type="primary">rpmD</name>
    <name type="ordered locus">Swol_2315</name>
</gene>